<keyword id="KW-1035">Host cytoplasm</keyword>
<keyword id="KW-1048">Host nucleus</keyword>
<keyword id="KW-0964">Secreted</keyword>
<keyword id="KW-0732">Signal</keyword>
<keyword id="KW-0843">Virulence</keyword>
<proteinExistence type="evidence at transcript level"/>
<comment type="function">
    <text evidence="2">Effector that acts as a broad suppressor of cell death to interrupt plant immunity. Inhibits cell death induced by cell death-inducing proteins, including the PAMP elicitor INF1 from P.infestans.</text>
</comment>
<comment type="subcellular location">
    <subcellularLocation>
        <location evidence="2">Secreted</location>
    </subcellularLocation>
    <subcellularLocation>
        <location evidence="2">Host cytoplasm</location>
    </subcellularLocation>
    <subcellularLocation>
        <location evidence="2">Host nucleus</location>
    </subcellularLocation>
</comment>
<comment type="induction">
    <text evidence="2">Expression is up-regulated at later stages of infection.</text>
</comment>
<comment type="domain">
    <text evidence="5">Has a conserved RxLR motif that acts to carry the protein into the host cell cytoplasm. Lacks the 'so-called' EER motif, which is found closely behind the RxLR motif in most of RxLR effector family members, but the presence of an EER motif is not always essential for the translocation of every RxLR effector into host cells, or for inducing a hypersensitive response.</text>
</comment>
<comment type="similarity">
    <text evidence="4">Belongs to the RxLR effector family.</text>
</comment>
<sequence length="124" mass="14276">MIRRSPLVAVILFVAITHVVLALDDATRIDSSEIVPSEPTRRTRVSPHYISSGGSKRSLRQQAFRPVAYLKNKLNWFLSRFFGTPTDAFTQMNSPRSSRIANIFRKIYMHTAKDDEYFSRLRSV</sequence>
<dbReference type="EMBL" id="KX010961">
    <property type="protein sequence ID" value="ANC73381.1"/>
    <property type="molecule type" value="mRNA"/>
</dbReference>
<dbReference type="GO" id="GO:0005576">
    <property type="term" value="C:extracellular region"/>
    <property type="evidence" value="ECO:0007669"/>
    <property type="project" value="UniProtKB-SubCell"/>
</dbReference>
<dbReference type="GO" id="GO:0030430">
    <property type="term" value="C:host cell cytoplasm"/>
    <property type="evidence" value="ECO:0007669"/>
    <property type="project" value="UniProtKB-SubCell"/>
</dbReference>
<dbReference type="GO" id="GO:0042025">
    <property type="term" value="C:host cell nucleus"/>
    <property type="evidence" value="ECO:0007669"/>
    <property type="project" value="UniProtKB-SubCell"/>
</dbReference>
<reference key="1">
    <citation type="journal article" date="2016" name="Front. Microbiol.">
        <title>Studying the mechanism of Plasmopara viticola RxLR effectors on suppressing plant immunity.</title>
        <authorList>
            <person name="Xiang J."/>
            <person name="Li X."/>
            <person name="Wu J."/>
            <person name="Yin L."/>
            <person name="Zhang Y."/>
            <person name="Lu J."/>
        </authorList>
    </citation>
    <scope>NUCLEOTIDE SEQUENCE [MRNA]</scope>
    <scope>INDUCTION</scope>
    <scope>FUNCTION</scope>
    <scope>SUBCELLULAR LOCATION</scope>
    <scope>DOMAIN</scope>
    <source>
        <strain>ZJ-1-1</strain>
    </source>
</reference>
<protein>
    <recommendedName>
        <fullName evidence="3">Secreted RxLR effector protein 49</fullName>
    </recommendedName>
</protein>
<organism>
    <name type="scientific">Plasmopara viticola</name>
    <name type="common">Downy mildew of grapevine</name>
    <name type="synonym">Botrytis viticola</name>
    <dbReference type="NCBI Taxonomy" id="143451"/>
    <lineage>
        <taxon>Eukaryota</taxon>
        <taxon>Sar</taxon>
        <taxon>Stramenopiles</taxon>
        <taxon>Oomycota</taxon>
        <taxon>Peronosporales</taxon>
        <taxon>Peronosporaceae</taxon>
        <taxon>Plasmopara</taxon>
    </lineage>
</organism>
<feature type="signal peptide" evidence="1">
    <location>
        <begin position="1"/>
        <end position="22"/>
    </location>
</feature>
<feature type="chain" id="PRO_5008116090" description="Secreted RxLR effector protein 49">
    <location>
        <begin position="23"/>
        <end position="124"/>
    </location>
</feature>
<feature type="short sequence motif" description="RxLR" evidence="5">
    <location>
        <begin position="57"/>
        <end position="60"/>
    </location>
</feature>
<gene>
    <name evidence="3" type="primary">RxLR49</name>
</gene>
<accession>A0A182BSS2</accession>
<name>RLR49_PLAVT</name>
<evidence type="ECO:0000255" key="1"/>
<evidence type="ECO:0000269" key="2">
    <source>
    </source>
</evidence>
<evidence type="ECO:0000303" key="3">
    <source>
    </source>
</evidence>
<evidence type="ECO:0000305" key="4"/>
<evidence type="ECO:0000305" key="5">
    <source>
    </source>
</evidence>